<proteinExistence type="inferred from homology"/>
<feature type="chain" id="PRO_1000011526" description="4-hydroxy-3-methylbut-2-en-1-yl diphosphate synthase (flavodoxin)">
    <location>
        <begin position="1"/>
        <end position="372"/>
    </location>
</feature>
<feature type="binding site" evidence="1">
    <location>
        <position position="270"/>
    </location>
    <ligand>
        <name>[4Fe-4S] cluster</name>
        <dbReference type="ChEBI" id="CHEBI:49883"/>
    </ligand>
</feature>
<feature type="binding site" evidence="1">
    <location>
        <position position="273"/>
    </location>
    <ligand>
        <name>[4Fe-4S] cluster</name>
        <dbReference type="ChEBI" id="CHEBI:49883"/>
    </ligand>
</feature>
<feature type="binding site" evidence="1">
    <location>
        <position position="305"/>
    </location>
    <ligand>
        <name>[4Fe-4S] cluster</name>
        <dbReference type="ChEBI" id="CHEBI:49883"/>
    </ligand>
</feature>
<feature type="binding site" evidence="1">
    <location>
        <position position="312"/>
    </location>
    <ligand>
        <name>[4Fe-4S] cluster</name>
        <dbReference type="ChEBI" id="CHEBI:49883"/>
    </ligand>
</feature>
<dbReference type="EC" id="1.17.7.3" evidence="1"/>
<dbReference type="EMBL" id="CP000034">
    <property type="protein sequence ID" value="ABB62758.1"/>
    <property type="molecule type" value="Genomic_DNA"/>
</dbReference>
<dbReference type="RefSeq" id="WP_000556021.1">
    <property type="nucleotide sequence ID" value="NC_007606.1"/>
</dbReference>
<dbReference type="RefSeq" id="YP_404249.1">
    <property type="nucleotide sequence ID" value="NC_007606.1"/>
</dbReference>
<dbReference type="SMR" id="Q32D47"/>
<dbReference type="STRING" id="300267.SDY_2711"/>
<dbReference type="EnsemblBacteria" id="ABB62758">
    <property type="protein sequence ID" value="ABB62758"/>
    <property type="gene ID" value="SDY_2711"/>
</dbReference>
<dbReference type="KEGG" id="sdy:SDY_2711"/>
<dbReference type="PATRIC" id="fig|300267.13.peg.3269"/>
<dbReference type="HOGENOM" id="CLU_042258_0_0_6"/>
<dbReference type="UniPathway" id="UPA00056">
    <property type="reaction ID" value="UER00096"/>
</dbReference>
<dbReference type="Proteomes" id="UP000002716">
    <property type="component" value="Chromosome"/>
</dbReference>
<dbReference type="GO" id="GO:0051539">
    <property type="term" value="F:4 iron, 4 sulfur cluster binding"/>
    <property type="evidence" value="ECO:0007669"/>
    <property type="project" value="UniProtKB-UniRule"/>
</dbReference>
<dbReference type="GO" id="GO:0046429">
    <property type="term" value="F:4-hydroxy-3-methylbut-2-en-1-yl diphosphate synthase activity (ferredoxin)"/>
    <property type="evidence" value="ECO:0007669"/>
    <property type="project" value="UniProtKB-UniRule"/>
</dbReference>
<dbReference type="GO" id="GO:0141197">
    <property type="term" value="F:4-hydroxy-3-methylbut-2-enyl-diphosphate synthase activity (flavodoxin)"/>
    <property type="evidence" value="ECO:0007669"/>
    <property type="project" value="UniProtKB-EC"/>
</dbReference>
<dbReference type="GO" id="GO:0005506">
    <property type="term" value="F:iron ion binding"/>
    <property type="evidence" value="ECO:0007669"/>
    <property type="project" value="InterPro"/>
</dbReference>
<dbReference type="GO" id="GO:0019288">
    <property type="term" value="P:isopentenyl diphosphate biosynthetic process, methylerythritol 4-phosphate pathway"/>
    <property type="evidence" value="ECO:0007669"/>
    <property type="project" value="UniProtKB-UniRule"/>
</dbReference>
<dbReference type="GO" id="GO:0016114">
    <property type="term" value="P:terpenoid biosynthetic process"/>
    <property type="evidence" value="ECO:0007669"/>
    <property type="project" value="InterPro"/>
</dbReference>
<dbReference type="FunFam" id="3.20.20.20:FF:000001">
    <property type="entry name" value="4-hydroxy-3-methylbut-2-en-1-yl diphosphate synthase (flavodoxin)"/>
    <property type="match status" value="1"/>
</dbReference>
<dbReference type="FunFam" id="3.30.413.10:FF:000002">
    <property type="entry name" value="4-hydroxy-3-methylbut-2-en-1-yl diphosphate synthase (flavodoxin)"/>
    <property type="match status" value="1"/>
</dbReference>
<dbReference type="Gene3D" id="3.20.20.20">
    <property type="entry name" value="Dihydropteroate synthase-like"/>
    <property type="match status" value="1"/>
</dbReference>
<dbReference type="Gene3D" id="3.30.413.10">
    <property type="entry name" value="Sulfite Reductase Hemoprotein, domain 1"/>
    <property type="match status" value="1"/>
</dbReference>
<dbReference type="HAMAP" id="MF_00159">
    <property type="entry name" value="IspG"/>
    <property type="match status" value="1"/>
</dbReference>
<dbReference type="InterPro" id="IPR011005">
    <property type="entry name" value="Dihydropteroate_synth-like_sf"/>
</dbReference>
<dbReference type="InterPro" id="IPR016425">
    <property type="entry name" value="IspG_bac"/>
</dbReference>
<dbReference type="InterPro" id="IPR004588">
    <property type="entry name" value="IspG_bac-typ"/>
</dbReference>
<dbReference type="InterPro" id="IPR045854">
    <property type="entry name" value="NO2/SO3_Rdtase_4Fe4S_sf"/>
</dbReference>
<dbReference type="NCBIfam" id="TIGR00612">
    <property type="entry name" value="ispG_gcpE"/>
    <property type="match status" value="1"/>
</dbReference>
<dbReference type="NCBIfam" id="NF001540">
    <property type="entry name" value="PRK00366.1"/>
    <property type="match status" value="1"/>
</dbReference>
<dbReference type="PANTHER" id="PTHR30454">
    <property type="entry name" value="4-HYDROXY-3-METHYLBUT-2-EN-1-YL DIPHOSPHATE SYNTHASE"/>
    <property type="match status" value="1"/>
</dbReference>
<dbReference type="PANTHER" id="PTHR30454:SF0">
    <property type="entry name" value="4-HYDROXY-3-METHYLBUT-2-EN-1-YL DIPHOSPHATE SYNTHASE (FERREDOXIN), CHLOROPLASTIC"/>
    <property type="match status" value="1"/>
</dbReference>
<dbReference type="Pfam" id="PF04551">
    <property type="entry name" value="GcpE"/>
    <property type="match status" value="1"/>
</dbReference>
<dbReference type="PIRSF" id="PIRSF004640">
    <property type="entry name" value="IspG"/>
    <property type="match status" value="1"/>
</dbReference>
<dbReference type="SUPFAM" id="SSF51717">
    <property type="entry name" value="Dihydropteroate synthetase-like"/>
    <property type="match status" value="1"/>
</dbReference>
<dbReference type="SUPFAM" id="SSF56014">
    <property type="entry name" value="Nitrite and sulphite reductase 4Fe-4S domain-like"/>
    <property type="match status" value="1"/>
</dbReference>
<protein>
    <recommendedName>
        <fullName evidence="1">4-hydroxy-3-methylbut-2-en-1-yl diphosphate synthase (flavodoxin)</fullName>
        <ecNumber evidence="1">1.17.7.3</ecNumber>
    </recommendedName>
    <alternativeName>
        <fullName evidence="1">1-hydroxy-2-methyl-2-(E)-butenyl 4-diphosphate synthase</fullName>
    </alternativeName>
</protein>
<evidence type="ECO:0000255" key="1">
    <source>
        <dbReference type="HAMAP-Rule" id="MF_00159"/>
    </source>
</evidence>
<accession>Q32D47</accession>
<gene>
    <name evidence="1" type="primary">ispG</name>
    <name type="ordered locus">SDY_2711</name>
</gene>
<name>ISPG_SHIDS</name>
<sequence>MHSQAPIQRRKSTRIYVGNVPIGDGAPIAVQSMTNTRTTDVEATVNQIKALERVGADIVRVSVPTMDAAEAFKLIKQRVNVPLVADIHFDYRIALKVAEYGVDCLRINPGNIGNEERIRMVVDCARDKNIPIRIGVNAGSLEKDLQEKYGEPTPQALLESAMRHVDHLDRLNFDQFKVSVKASDVFLAVESYRLLAKQIDQPLHLGITEAGGARSGAVKSAIGLGLLLSEGIGDTLRVSLAADPVEEIKVGFDILKSLRIRSRGINFIACPTCSRQEFDVIGTVNALEQRLEDIITPMDVSIIGCVVNGPGEALVSTLGVTGGNKKSGLYEDGVRKDRLDNNDMIDQLEARIRAKASQLDEARRIDVQQVEK</sequence>
<keyword id="KW-0004">4Fe-4S</keyword>
<keyword id="KW-0408">Iron</keyword>
<keyword id="KW-0411">Iron-sulfur</keyword>
<keyword id="KW-0414">Isoprene biosynthesis</keyword>
<keyword id="KW-0479">Metal-binding</keyword>
<keyword id="KW-0560">Oxidoreductase</keyword>
<keyword id="KW-1185">Reference proteome</keyword>
<comment type="function">
    <text evidence="1">Converts 2C-methyl-D-erythritol 2,4-cyclodiphosphate (ME-2,4cPP) into 1-hydroxy-2-methyl-2-(E)-butenyl 4-diphosphate.</text>
</comment>
<comment type="catalytic activity">
    <reaction evidence="1">
        <text>(2E)-4-hydroxy-3-methylbut-2-enyl diphosphate + oxidized [flavodoxin] + H2O + 2 H(+) = 2-C-methyl-D-erythritol 2,4-cyclic diphosphate + reduced [flavodoxin]</text>
        <dbReference type="Rhea" id="RHEA:43604"/>
        <dbReference type="Rhea" id="RHEA-COMP:10622"/>
        <dbReference type="Rhea" id="RHEA-COMP:10623"/>
        <dbReference type="ChEBI" id="CHEBI:15377"/>
        <dbReference type="ChEBI" id="CHEBI:15378"/>
        <dbReference type="ChEBI" id="CHEBI:57618"/>
        <dbReference type="ChEBI" id="CHEBI:58210"/>
        <dbReference type="ChEBI" id="CHEBI:58483"/>
        <dbReference type="ChEBI" id="CHEBI:128753"/>
        <dbReference type="EC" id="1.17.7.3"/>
    </reaction>
</comment>
<comment type="cofactor">
    <cofactor evidence="1">
        <name>[4Fe-4S] cluster</name>
        <dbReference type="ChEBI" id="CHEBI:49883"/>
    </cofactor>
    <text evidence="1">Binds 1 [4Fe-4S] cluster.</text>
</comment>
<comment type="pathway">
    <text evidence="1">Isoprenoid biosynthesis; isopentenyl diphosphate biosynthesis via DXP pathway; isopentenyl diphosphate from 1-deoxy-D-xylulose 5-phosphate: step 5/6.</text>
</comment>
<comment type="similarity">
    <text evidence="1">Belongs to the IspG family.</text>
</comment>
<organism>
    <name type="scientific">Shigella dysenteriae serotype 1 (strain Sd197)</name>
    <dbReference type="NCBI Taxonomy" id="300267"/>
    <lineage>
        <taxon>Bacteria</taxon>
        <taxon>Pseudomonadati</taxon>
        <taxon>Pseudomonadota</taxon>
        <taxon>Gammaproteobacteria</taxon>
        <taxon>Enterobacterales</taxon>
        <taxon>Enterobacteriaceae</taxon>
        <taxon>Shigella</taxon>
    </lineage>
</organism>
<reference key="1">
    <citation type="journal article" date="2005" name="Nucleic Acids Res.">
        <title>Genome dynamics and diversity of Shigella species, the etiologic agents of bacillary dysentery.</title>
        <authorList>
            <person name="Yang F."/>
            <person name="Yang J."/>
            <person name="Zhang X."/>
            <person name="Chen L."/>
            <person name="Jiang Y."/>
            <person name="Yan Y."/>
            <person name="Tang X."/>
            <person name="Wang J."/>
            <person name="Xiong Z."/>
            <person name="Dong J."/>
            <person name="Xue Y."/>
            <person name="Zhu Y."/>
            <person name="Xu X."/>
            <person name="Sun L."/>
            <person name="Chen S."/>
            <person name="Nie H."/>
            <person name="Peng J."/>
            <person name="Xu J."/>
            <person name="Wang Y."/>
            <person name="Yuan Z."/>
            <person name="Wen Y."/>
            <person name="Yao Z."/>
            <person name="Shen Y."/>
            <person name="Qiang B."/>
            <person name="Hou Y."/>
            <person name="Yu J."/>
            <person name="Jin Q."/>
        </authorList>
    </citation>
    <scope>NUCLEOTIDE SEQUENCE [LARGE SCALE GENOMIC DNA]</scope>
    <source>
        <strain>Sd197</strain>
    </source>
</reference>